<dbReference type="EMBL" id="CP000469">
    <property type="protein sequence ID" value="ABK50220.1"/>
    <property type="molecule type" value="Genomic_DNA"/>
</dbReference>
<dbReference type="RefSeq" id="WP_011624525.1">
    <property type="nucleotide sequence ID" value="NC_008577.1"/>
</dbReference>
<dbReference type="SMR" id="A0L2F1"/>
<dbReference type="STRING" id="94122.Shewana3_4003"/>
<dbReference type="KEGG" id="shn:Shewana3_4003"/>
<dbReference type="eggNOG" id="COG0316">
    <property type="taxonomic scope" value="Bacteria"/>
</dbReference>
<dbReference type="eggNOG" id="COG0694">
    <property type="taxonomic scope" value="Bacteria"/>
</dbReference>
<dbReference type="HOGENOM" id="CLU_094569_0_0_6"/>
<dbReference type="OrthoDB" id="9785450at2"/>
<dbReference type="Proteomes" id="UP000002589">
    <property type="component" value="Chromosome"/>
</dbReference>
<dbReference type="GO" id="GO:0051539">
    <property type="term" value="F:4 iron, 4 sulfur cluster binding"/>
    <property type="evidence" value="ECO:0007669"/>
    <property type="project" value="UniProtKB-UniRule"/>
</dbReference>
<dbReference type="GO" id="GO:0005506">
    <property type="term" value="F:iron ion binding"/>
    <property type="evidence" value="ECO:0007669"/>
    <property type="project" value="InterPro"/>
</dbReference>
<dbReference type="GO" id="GO:0016226">
    <property type="term" value="P:iron-sulfur cluster assembly"/>
    <property type="evidence" value="ECO:0007669"/>
    <property type="project" value="UniProtKB-UniRule"/>
</dbReference>
<dbReference type="GO" id="GO:0051604">
    <property type="term" value="P:protein maturation"/>
    <property type="evidence" value="ECO:0007669"/>
    <property type="project" value="UniProtKB-UniRule"/>
</dbReference>
<dbReference type="Gene3D" id="3.30.300.130">
    <property type="entry name" value="Fe-S cluster assembly (FSCA)"/>
    <property type="match status" value="1"/>
</dbReference>
<dbReference type="Gene3D" id="2.60.300.12">
    <property type="entry name" value="HesB-like domain"/>
    <property type="match status" value="1"/>
</dbReference>
<dbReference type="HAMAP" id="MF_01637">
    <property type="entry name" value="Fe_S_biogen_NfuA"/>
    <property type="match status" value="1"/>
</dbReference>
<dbReference type="InterPro" id="IPR017726">
    <property type="entry name" value="Fe/S_biogenesis_protein_NfuA"/>
</dbReference>
<dbReference type="InterPro" id="IPR000361">
    <property type="entry name" value="FeS_biogenesis"/>
</dbReference>
<dbReference type="InterPro" id="IPR034904">
    <property type="entry name" value="FSCA_dom_sf"/>
</dbReference>
<dbReference type="InterPro" id="IPR035903">
    <property type="entry name" value="HesB-like_dom_sf"/>
</dbReference>
<dbReference type="InterPro" id="IPR001075">
    <property type="entry name" value="NIF_FeS_clus_asmbl_NifU_C"/>
</dbReference>
<dbReference type="NCBIfam" id="NF008392">
    <property type="entry name" value="PRK11190.1"/>
    <property type="match status" value="1"/>
</dbReference>
<dbReference type="NCBIfam" id="TIGR03341">
    <property type="entry name" value="YhgI_GntY"/>
    <property type="match status" value="1"/>
</dbReference>
<dbReference type="PANTHER" id="PTHR11178:SF51">
    <property type="entry name" value="FE_S BIOGENESIS PROTEIN NFUA"/>
    <property type="match status" value="1"/>
</dbReference>
<dbReference type="PANTHER" id="PTHR11178">
    <property type="entry name" value="IRON-SULFUR CLUSTER SCAFFOLD PROTEIN NFU-RELATED"/>
    <property type="match status" value="1"/>
</dbReference>
<dbReference type="Pfam" id="PF01521">
    <property type="entry name" value="Fe-S_biosyn"/>
    <property type="match status" value="1"/>
</dbReference>
<dbReference type="Pfam" id="PF01106">
    <property type="entry name" value="NifU"/>
    <property type="match status" value="1"/>
</dbReference>
<dbReference type="SUPFAM" id="SSF117916">
    <property type="entry name" value="Fe-S cluster assembly (FSCA) domain-like"/>
    <property type="match status" value="1"/>
</dbReference>
<dbReference type="SUPFAM" id="SSF89360">
    <property type="entry name" value="HesB-like domain"/>
    <property type="match status" value="1"/>
</dbReference>
<comment type="function">
    <text evidence="1">Involved in iron-sulfur cluster biogenesis. Binds a 4Fe-4S cluster, can transfer this cluster to apoproteins, and thereby intervenes in the maturation of Fe/S proteins. Could also act as a scaffold/chaperone for damaged Fe/S proteins.</text>
</comment>
<comment type="cofactor">
    <cofactor evidence="1">
        <name>[4Fe-4S] cluster</name>
        <dbReference type="ChEBI" id="CHEBI:49883"/>
    </cofactor>
    <text evidence="1">Binds 1 [4Fe-4S] cluster per subunit. The cluster is presumably bound at the interface of two monomers.</text>
</comment>
<comment type="subunit">
    <text evidence="1">Homodimer.</text>
</comment>
<comment type="similarity">
    <text evidence="1">Belongs to the NfuA family.</text>
</comment>
<sequence length="192" mass="20492">MITISDAAQAHFVKLLADQPEGTHIRVFVISPGTAQAECGVSYCPPDAVESDDIELEFNGFSAMVDEKSAPFLEEASIDFVTDQLGSQLTLKAPNAKMRKVASDAPLAERVEYVIQSEINPQLASHGGNIMLVEITQEGVAVLQFGGGCNGCSQVDITLKDGIEKQLLDMFPGELSGVSDVTDHQHGAHSYA</sequence>
<proteinExistence type="inferred from homology"/>
<organism>
    <name type="scientific">Shewanella sp. (strain ANA-3)</name>
    <dbReference type="NCBI Taxonomy" id="94122"/>
    <lineage>
        <taxon>Bacteria</taxon>
        <taxon>Pseudomonadati</taxon>
        <taxon>Pseudomonadota</taxon>
        <taxon>Gammaproteobacteria</taxon>
        <taxon>Alteromonadales</taxon>
        <taxon>Shewanellaceae</taxon>
        <taxon>Shewanella</taxon>
    </lineage>
</organism>
<accession>A0L2F1</accession>
<reference key="1">
    <citation type="submission" date="2006-09" db="EMBL/GenBank/DDBJ databases">
        <title>Complete sequence of chromosome 1 of Shewanella sp. ANA-3.</title>
        <authorList>
            <person name="Copeland A."/>
            <person name="Lucas S."/>
            <person name="Lapidus A."/>
            <person name="Barry K."/>
            <person name="Detter J.C."/>
            <person name="Glavina del Rio T."/>
            <person name="Hammon N."/>
            <person name="Israni S."/>
            <person name="Dalin E."/>
            <person name="Tice H."/>
            <person name="Pitluck S."/>
            <person name="Chertkov O."/>
            <person name="Brettin T."/>
            <person name="Bruce D."/>
            <person name="Han C."/>
            <person name="Tapia R."/>
            <person name="Gilna P."/>
            <person name="Schmutz J."/>
            <person name="Larimer F."/>
            <person name="Land M."/>
            <person name="Hauser L."/>
            <person name="Kyrpides N."/>
            <person name="Kim E."/>
            <person name="Newman D."/>
            <person name="Salticov C."/>
            <person name="Konstantinidis K."/>
            <person name="Klappenback J."/>
            <person name="Tiedje J."/>
            <person name="Richardson P."/>
        </authorList>
    </citation>
    <scope>NUCLEOTIDE SEQUENCE [LARGE SCALE GENOMIC DNA]</scope>
    <source>
        <strain>ANA-3</strain>
    </source>
</reference>
<evidence type="ECO:0000255" key="1">
    <source>
        <dbReference type="HAMAP-Rule" id="MF_01637"/>
    </source>
</evidence>
<gene>
    <name evidence="1" type="primary">nfuA</name>
    <name type="ordered locus">Shewana3_4003</name>
</gene>
<protein>
    <recommendedName>
        <fullName evidence="1">Fe/S biogenesis protein NfuA</fullName>
    </recommendedName>
</protein>
<keyword id="KW-0004">4Fe-4S</keyword>
<keyword id="KW-0408">Iron</keyword>
<keyword id="KW-0411">Iron-sulfur</keyword>
<keyword id="KW-0479">Metal-binding</keyword>
<feature type="chain" id="PRO_0000292093" description="Fe/S biogenesis protein NfuA">
    <location>
        <begin position="1"/>
        <end position="192"/>
    </location>
</feature>
<feature type="binding site" evidence="1">
    <location>
        <position position="149"/>
    </location>
    <ligand>
        <name>[4Fe-4S] cluster</name>
        <dbReference type="ChEBI" id="CHEBI:49883"/>
    </ligand>
</feature>
<feature type="binding site" evidence="1">
    <location>
        <position position="152"/>
    </location>
    <ligand>
        <name>[4Fe-4S] cluster</name>
        <dbReference type="ChEBI" id="CHEBI:49883"/>
    </ligand>
</feature>
<name>NFUA_SHESA</name>